<comment type="function">
    <text>PsaA and PsaB bind P700, the primary electron donor of photosystem I (PSI), as well as the electron acceptors A0, A1 and FX. PSI is a plastocyanin/cytochrome c6-ferredoxin oxidoreductase, converting photonic excitation into a charge separation, which transfers an electron from the donor P700 chlorophyll pair to the spectroscopically characterized acceptors A0, A1, FX, FA and FB in turn. Oxidized P700 is reduced on the lumenal side of the thylakoid membrane by plastocyanin or cytochrome c6.</text>
</comment>
<comment type="catalytic activity">
    <reaction evidence="1">
        <text>reduced [plastocyanin] + hnu + oxidized [2Fe-2S]-[ferredoxin] = oxidized [plastocyanin] + reduced [2Fe-2S]-[ferredoxin]</text>
        <dbReference type="Rhea" id="RHEA:30407"/>
        <dbReference type="Rhea" id="RHEA-COMP:10000"/>
        <dbReference type="Rhea" id="RHEA-COMP:10001"/>
        <dbReference type="Rhea" id="RHEA-COMP:10039"/>
        <dbReference type="Rhea" id="RHEA-COMP:10040"/>
        <dbReference type="ChEBI" id="CHEBI:29036"/>
        <dbReference type="ChEBI" id="CHEBI:30212"/>
        <dbReference type="ChEBI" id="CHEBI:33737"/>
        <dbReference type="ChEBI" id="CHEBI:33738"/>
        <dbReference type="ChEBI" id="CHEBI:49552"/>
        <dbReference type="EC" id="1.97.1.12"/>
    </reaction>
</comment>
<comment type="cofactor">
    <text evidence="1">P700 is a chlorophyll a/chlorophyll a' dimer, A0 is one or more chlorophyll a, A1 is one or both phylloquinones and FX is a shared 4Fe-4S iron-sulfur center.</text>
</comment>
<comment type="subunit">
    <text evidence="1">The PsaA/B heterodimer binds the P700 chlorophyll special pair and subsequent electron acceptors. PSI consists of a core antenna complex that captures photons, and an electron transfer chain that converts photonic excitation into a charge separation. The eukaryotic PSI reaction center is composed of at least 11 subunits.</text>
</comment>
<comment type="subcellular location">
    <subcellularLocation>
        <location evidence="1">Plastid</location>
        <location evidence="1">Chloroplast thylakoid membrane</location>
        <topology evidence="1">Multi-pass membrane protein</topology>
    </subcellularLocation>
</comment>
<comment type="similarity">
    <text evidence="1">Belongs to the PsaA/PsaB family.</text>
</comment>
<evidence type="ECO:0000255" key="1">
    <source>
        <dbReference type="HAMAP-Rule" id="MF_00458"/>
    </source>
</evidence>
<sequence>MAISSKEQETKKVKISVDKNPVDTSFEKWAQPGHFSRTLAKGPKTTTWIWNLHADAHDFDSQTSSLEEVSRKIFSAHFGQLAVIFLWLSGMYFHGARFSNYVAWLSNPTGIKPSAQVVWPIVGQEILNGDVGGGFQGVQVTSGWFQLWRASGITTEFQLYCTAIGGLGMAALMLFAGWFHYHKAAPKLEWFQNVESMMNHHLAGLLGLGCLGWAGHQIHLSLPINKLLDSGVSPQEIPLPHEFLINRELMAQLYPSFSKGLVPFFTLNWAEYSDFLTFKGGLNPVTGGLWLSDTAHHHLALAVLFLAAGHMYRTNWGIGHSMKEILEAHKGPFTGNGHEGLYEILTTSWHAQLAINLAMMGSLSIIVAHHMYAMPPYPYIATDYPTQLSLFTHHMWIGGFCVVGAGAHASIFMVRDYNPAENYNNLLDRIIRHRDAIVSHLNWVCIFLGFHSFGLYIHNDTMRALGRSQDMFSDTAIQLQPIFAQWVQSIHTLAPGNTAPNALATASYAFGGEVVSVGNKVAMMPISLGTADFMVHHIHAFTIHVTVLILVKGFLFSRNSRLIPDKANLGFRFPCDGPGRGGTCQVSGWDHVFLGLFWMYNSLSVAIFHFSWKMQSDVWGSVSPSGNVSHITGGNFAQSAITINGWLRDFLWAQASQVIQSYGSALSAYGLIFLAAHFVWAFSLMFLFSGRGYWQELIESIVWAHNKIKVAPAIQPRALSITQGRAVGVAHYLLGGIGTTWAFFLARIISVG</sequence>
<protein>
    <recommendedName>
        <fullName evidence="1">Photosystem I P700 chlorophyll a apoprotein A1</fullName>
        <ecNumber evidence="1">1.97.1.12</ecNumber>
    </recommendedName>
    <alternativeName>
        <fullName evidence="1">PSI-A</fullName>
    </alternativeName>
    <alternativeName>
        <fullName evidence="1">PsaA</fullName>
    </alternativeName>
</protein>
<geneLocation type="chloroplast"/>
<proteinExistence type="inferred from homology"/>
<feature type="chain" id="PRO_0000088572" description="Photosystem I P700 chlorophyll a apoprotein A1">
    <location>
        <begin position="1"/>
        <end position="752"/>
    </location>
</feature>
<feature type="transmembrane region" description="Helical; Name=I" evidence="1">
    <location>
        <begin position="73"/>
        <end position="96"/>
    </location>
</feature>
<feature type="transmembrane region" description="Helical; Name=II" evidence="1">
    <location>
        <begin position="159"/>
        <end position="182"/>
    </location>
</feature>
<feature type="transmembrane region" description="Helical; Name=III" evidence="1">
    <location>
        <begin position="198"/>
        <end position="222"/>
    </location>
</feature>
<feature type="transmembrane region" description="Helical; Name=IV" evidence="1">
    <location>
        <begin position="294"/>
        <end position="312"/>
    </location>
</feature>
<feature type="transmembrane region" description="Helical; Name=V" evidence="1">
    <location>
        <begin position="349"/>
        <end position="372"/>
    </location>
</feature>
<feature type="transmembrane region" description="Helical; Name=VI" evidence="1">
    <location>
        <begin position="388"/>
        <end position="414"/>
    </location>
</feature>
<feature type="transmembrane region" description="Helical; Name=VII" evidence="1">
    <location>
        <begin position="436"/>
        <end position="458"/>
    </location>
</feature>
<feature type="transmembrane region" description="Helical; Name=VIII" evidence="1">
    <location>
        <begin position="533"/>
        <end position="551"/>
    </location>
</feature>
<feature type="transmembrane region" description="Helical; Name=IX" evidence="1">
    <location>
        <begin position="591"/>
        <end position="612"/>
    </location>
</feature>
<feature type="transmembrane region" description="Helical; Name=X" evidence="1">
    <location>
        <begin position="666"/>
        <end position="688"/>
    </location>
</feature>
<feature type="transmembrane region" description="Helical; Name=XI" evidence="1">
    <location>
        <begin position="726"/>
        <end position="746"/>
    </location>
</feature>
<feature type="binding site" evidence="1">
    <location>
        <position position="575"/>
    </location>
    <ligand>
        <name>[4Fe-4S] cluster</name>
        <dbReference type="ChEBI" id="CHEBI:49883"/>
        <note>ligand shared between dimeric partners</note>
    </ligand>
</feature>
<feature type="binding site" evidence="1">
    <location>
        <position position="584"/>
    </location>
    <ligand>
        <name>[4Fe-4S] cluster</name>
        <dbReference type="ChEBI" id="CHEBI:49883"/>
        <note>ligand shared between dimeric partners</note>
    </ligand>
</feature>
<feature type="binding site" description="axial binding residue" evidence="1">
    <location>
        <position position="677"/>
    </location>
    <ligand>
        <name>chlorophyll a'</name>
        <dbReference type="ChEBI" id="CHEBI:189419"/>
        <label>A1</label>
    </ligand>
    <ligandPart>
        <name>Mg</name>
        <dbReference type="ChEBI" id="CHEBI:25107"/>
    </ligandPart>
</feature>
<feature type="binding site" description="axial binding residue" evidence="1">
    <location>
        <position position="685"/>
    </location>
    <ligand>
        <name>chlorophyll a</name>
        <dbReference type="ChEBI" id="CHEBI:58416"/>
        <label>A3</label>
    </ligand>
    <ligandPart>
        <name>Mg</name>
        <dbReference type="ChEBI" id="CHEBI:25107"/>
    </ligandPart>
</feature>
<feature type="binding site" evidence="1">
    <location>
        <position position="693"/>
    </location>
    <ligand>
        <name>chlorophyll a</name>
        <dbReference type="ChEBI" id="CHEBI:58416"/>
        <label>A3</label>
    </ligand>
</feature>
<feature type="binding site" evidence="1">
    <location>
        <position position="694"/>
    </location>
    <ligand>
        <name>phylloquinone</name>
        <dbReference type="ChEBI" id="CHEBI:18067"/>
        <label>A</label>
    </ligand>
</feature>
<dbReference type="EC" id="1.97.1.12" evidence="1"/>
<dbReference type="EMBL" id="U38804">
    <property type="protein sequence ID" value="AAC08170.1"/>
    <property type="molecule type" value="Genomic_DNA"/>
</dbReference>
<dbReference type="PIR" id="S73205">
    <property type="entry name" value="S73205"/>
</dbReference>
<dbReference type="RefSeq" id="NP_053894.1">
    <property type="nucleotide sequence ID" value="NC_000925.1"/>
</dbReference>
<dbReference type="SMR" id="P51284"/>
<dbReference type="GeneID" id="809913"/>
<dbReference type="GO" id="GO:0009535">
    <property type="term" value="C:chloroplast thylakoid membrane"/>
    <property type="evidence" value="ECO:0007669"/>
    <property type="project" value="UniProtKB-SubCell"/>
</dbReference>
<dbReference type="GO" id="GO:0009522">
    <property type="term" value="C:photosystem I"/>
    <property type="evidence" value="ECO:0007669"/>
    <property type="project" value="UniProtKB-KW"/>
</dbReference>
<dbReference type="GO" id="GO:0051539">
    <property type="term" value="F:4 iron, 4 sulfur cluster binding"/>
    <property type="evidence" value="ECO:0007669"/>
    <property type="project" value="UniProtKB-KW"/>
</dbReference>
<dbReference type="GO" id="GO:0016168">
    <property type="term" value="F:chlorophyll binding"/>
    <property type="evidence" value="ECO:0007669"/>
    <property type="project" value="UniProtKB-KW"/>
</dbReference>
<dbReference type="GO" id="GO:0009055">
    <property type="term" value="F:electron transfer activity"/>
    <property type="evidence" value="ECO:0007669"/>
    <property type="project" value="UniProtKB-UniRule"/>
</dbReference>
<dbReference type="GO" id="GO:0000287">
    <property type="term" value="F:magnesium ion binding"/>
    <property type="evidence" value="ECO:0007669"/>
    <property type="project" value="UniProtKB-UniRule"/>
</dbReference>
<dbReference type="GO" id="GO:0016491">
    <property type="term" value="F:oxidoreductase activity"/>
    <property type="evidence" value="ECO:0007669"/>
    <property type="project" value="UniProtKB-KW"/>
</dbReference>
<dbReference type="GO" id="GO:0015979">
    <property type="term" value="P:photosynthesis"/>
    <property type="evidence" value="ECO:0007669"/>
    <property type="project" value="UniProtKB-UniRule"/>
</dbReference>
<dbReference type="Gene3D" id="1.20.1130.10">
    <property type="entry name" value="Photosystem I PsaA/PsaB"/>
    <property type="match status" value="1"/>
</dbReference>
<dbReference type="HAMAP" id="MF_00458">
    <property type="entry name" value="PSI_PsaA"/>
    <property type="match status" value="1"/>
</dbReference>
<dbReference type="InterPro" id="IPR006243">
    <property type="entry name" value="PSI_PsaA"/>
</dbReference>
<dbReference type="InterPro" id="IPR001280">
    <property type="entry name" value="PSI_PsaA/B"/>
</dbReference>
<dbReference type="InterPro" id="IPR020586">
    <property type="entry name" value="PSI_PsaA/B_CS"/>
</dbReference>
<dbReference type="InterPro" id="IPR036408">
    <property type="entry name" value="PSI_PsaA/B_sf"/>
</dbReference>
<dbReference type="NCBIfam" id="TIGR01335">
    <property type="entry name" value="psaA"/>
    <property type="match status" value="1"/>
</dbReference>
<dbReference type="PANTHER" id="PTHR30128">
    <property type="entry name" value="OUTER MEMBRANE PROTEIN, OMPA-RELATED"/>
    <property type="match status" value="1"/>
</dbReference>
<dbReference type="PANTHER" id="PTHR30128:SF19">
    <property type="entry name" value="PHOTOSYSTEM I P700 CHLOROPHYLL A APOPROTEIN A1-RELATED"/>
    <property type="match status" value="1"/>
</dbReference>
<dbReference type="Pfam" id="PF00223">
    <property type="entry name" value="PsaA_PsaB"/>
    <property type="match status" value="1"/>
</dbReference>
<dbReference type="PIRSF" id="PIRSF002905">
    <property type="entry name" value="PSI_A"/>
    <property type="match status" value="1"/>
</dbReference>
<dbReference type="PRINTS" id="PR00257">
    <property type="entry name" value="PHOTSYSPSAAB"/>
</dbReference>
<dbReference type="SUPFAM" id="SSF81558">
    <property type="entry name" value="Photosystem I subunits PsaA/PsaB"/>
    <property type="match status" value="1"/>
</dbReference>
<dbReference type="PROSITE" id="PS00419">
    <property type="entry name" value="PHOTOSYSTEM_I_PSAAB"/>
    <property type="match status" value="1"/>
</dbReference>
<keyword id="KW-0004">4Fe-4S</keyword>
<keyword id="KW-0148">Chlorophyll</keyword>
<keyword id="KW-0150">Chloroplast</keyword>
<keyword id="KW-0157">Chromophore</keyword>
<keyword id="KW-0249">Electron transport</keyword>
<keyword id="KW-0408">Iron</keyword>
<keyword id="KW-0411">Iron-sulfur</keyword>
<keyword id="KW-0460">Magnesium</keyword>
<keyword id="KW-0472">Membrane</keyword>
<keyword id="KW-0479">Metal-binding</keyword>
<keyword id="KW-0560">Oxidoreductase</keyword>
<keyword id="KW-0602">Photosynthesis</keyword>
<keyword id="KW-0603">Photosystem I</keyword>
<keyword id="KW-0934">Plastid</keyword>
<keyword id="KW-0793">Thylakoid</keyword>
<keyword id="KW-0812">Transmembrane</keyword>
<keyword id="KW-1133">Transmembrane helix</keyword>
<keyword id="KW-0813">Transport</keyword>
<gene>
    <name evidence="1" type="primary">psaA</name>
</gene>
<accession>P51284</accession>
<reference key="1">
    <citation type="journal article" date="1995" name="Plant Mol. Biol. Rep.">
        <title>Complete nucleotide sequence of the Porphyra purpurea chloroplast genome.</title>
        <authorList>
            <person name="Reith M.E."/>
            <person name="Munholland J."/>
        </authorList>
    </citation>
    <scope>NUCLEOTIDE SEQUENCE [LARGE SCALE GENOMIC DNA]</scope>
    <source>
        <strain>Avonport</strain>
    </source>
</reference>
<organism>
    <name type="scientific">Porphyra purpurea</name>
    <name type="common">Red seaweed</name>
    <name type="synonym">Ulva purpurea</name>
    <dbReference type="NCBI Taxonomy" id="2787"/>
    <lineage>
        <taxon>Eukaryota</taxon>
        <taxon>Rhodophyta</taxon>
        <taxon>Bangiophyceae</taxon>
        <taxon>Bangiales</taxon>
        <taxon>Bangiaceae</taxon>
        <taxon>Porphyra</taxon>
    </lineage>
</organism>
<name>PSAA_PORPU</name>